<sequence length="883" mass="96190">MSSTPKQTTGDALAGHTPMMQQYLRLKAEAGPLLLFYRMGDFYEMFYEDAERAARLLNLTLTKRGNSNGTPIPMAGIPVHAMEQYLARLVALGESVAICEQIGDPAAAKGPVERRIVRIVTPGTLTDEALLPAKADRALAAVCVTGKREPRAGLAWLNLASGAFHVTECAPAQLESELHRIAPAELIQAESAELHMAFEGARTRVPDWHFEADGARAQLLAHFKTDSLGGFDVEDMPAAVCAAGALLRYAARTQSQALAHVQTIAAERSGQYVLLDPVTRRNLELTQTLSGEESPTLFSLLDGCRTPMGSRLLRRWLHHPLRENEPVLARQHAIATMLTARQEGEQTFAAAGLLETLRDALNAFPDIERIAARVALRSVRPRELASLRDALAALPALHASLTPLSGSPRARELAAQLAMPPDIGELLARAVASEPAVAIRDGGVIAAGFDSELDELRALATDGGDFLVQLEARERERTGIGNLRVEFNRVHGFYIEVTKGQTDKVPEDYRRRQTLKNAERYITPELKTWEDRVLSAQDRSLAREKWLYEQLLDALAQYVRPLSQCASALAELDTLAALAEHARRHDWVAPELIDGAEIDIEAGRHPVVERAIERFTPNGCRLDQTRRMLLITGPNMGGKSTYMRQVALIALLARTGSFVPATRARVGRLDRIFTRIGAADDLAGGRSTFMMEMTEAAAILAASTPASLVLMDEIGRGTSTYDGLALAWAIAYRLLTHNRALTLFATHYFELTRLPAEQPTAANVHLAAAESAGGIVFLHEVREGPASRSYGIQVAQRAGVPAAVIRQASRELERLEAQGAPTPQLGLFAAALDADVQSQAMTEQAEDAAALAQLRDQLVAIDPDSLTPREALDALYRLKQHLT</sequence>
<evidence type="ECO:0000255" key="1">
    <source>
        <dbReference type="HAMAP-Rule" id="MF_00096"/>
    </source>
</evidence>
<feature type="chain" id="PRO_0000115075" description="DNA mismatch repair protein MutS">
    <location>
        <begin position="1"/>
        <end position="883"/>
    </location>
</feature>
<feature type="binding site" evidence="1">
    <location>
        <begin position="633"/>
        <end position="640"/>
    </location>
    <ligand>
        <name>ATP</name>
        <dbReference type="ChEBI" id="CHEBI:30616"/>
    </ligand>
</feature>
<gene>
    <name evidence="1" type="primary">mutS</name>
    <name type="ordered locus">BP1566</name>
</gene>
<protein>
    <recommendedName>
        <fullName evidence="1">DNA mismatch repair protein MutS</fullName>
    </recommendedName>
</protein>
<accession>Q7VY01</accession>
<dbReference type="EMBL" id="BX640415">
    <property type="protein sequence ID" value="CAE41855.1"/>
    <property type="molecule type" value="Genomic_DNA"/>
</dbReference>
<dbReference type="RefSeq" id="NP_880300.1">
    <property type="nucleotide sequence ID" value="NC_002929.2"/>
</dbReference>
<dbReference type="SMR" id="Q7VY01"/>
<dbReference type="STRING" id="257313.BP1566"/>
<dbReference type="PaxDb" id="257313-BP1566"/>
<dbReference type="KEGG" id="bpe:BP1566"/>
<dbReference type="PATRIC" id="fig|257313.5.peg.1681"/>
<dbReference type="eggNOG" id="COG0249">
    <property type="taxonomic scope" value="Bacteria"/>
</dbReference>
<dbReference type="HOGENOM" id="CLU_002472_4_0_4"/>
<dbReference type="Proteomes" id="UP000002676">
    <property type="component" value="Chromosome"/>
</dbReference>
<dbReference type="GO" id="GO:0005829">
    <property type="term" value="C:cytosol"/>
    <property type="evidence" value="ECO:0007669"/>
    <property type="project" value="TreeGrafter"/>
</dbReference>
<dbReference type="GO" id="GO:0005524">
    <property type="term" value="F:ATP binding"/>
    <property type="evidence" value="ECO:0007669"/>
    <property type="project" value="UniProtKB-UniRule"/>
</dbReference>
<dbReference type="GO" id="GO:0140664">
    <property type="term" value="F:ATP-dependent DNA damage sensor activity"/>
    <property type="evidence" value="ECO:0007669"/>
    <property type="project" value="InterPro"/>
</dbReference>
<dbReference type="GO" id="GO:0003684">
    <property type="term" value="F:damaged DNA binding"/>
    <property type="evidence" value="ECO:0007669"/>
    <property type="project" value="UniProtKB-UniRule"/>
</dbReference>
<dbReference type="GO" id="GO:0030983">
    <property type="term" value="F:mismatched DNA binding"/>
    <property type="evidence" value="ECO:0007669"/>
    <property type="project" value="InterPro"/>
</dbReference>
<dbReference type="GO" id="GO:0006298">
    <property type="term" value="P:mismatch repair"/>
    <property type="evidence" value="ECO:0007669"/>
    <property type="project" value="UniProtKB-UniRule"/>
</dbReference>
<dbReference type="CDD" id="cd03284">
    <property type="entry name" value="ABC_MutS1"/>
    <property type="match status" value="1"/>
</dbReference>
<dbReference type="FunFam" id="1.10.1420.10:FF:000002">
    <property type="entry name" value="DNA mismatch repair protein MutS"/>
    <property type="match status" value="1"/>
</dbReference>
<dbReference type="FunFam" id="3.40.1170.10:FF:000001">
    <property type="entry name" value="DNA mismatch repair protein MutS"/>
    <property type="match status" value="1"/>
</dbReference>
<dbReference type="Gene3D" id="1.10.1420.10">
    <property type="match status" value="2"/>
</dbReference>
<dbReference type="Gene3D" id="6.10.140.430">
    <property type="match status" value="1"/>
</dbReference>
<dbReference type="Gene3D" id="3.40.1170.10">
    <property type="entry name" value="DNA repair protein MutS, domain I"/>
    <property type="match status" value="1"/>
</dbReference>
<dbReference type="Gene3D" id="3.30.420.110">
    <property type="entry name" value="MutS, connector domain"/>
    <property type="match status" value="1"/>
</dbReference>
<dbReference type="Gene3D" id="3.40.50.300">
    <property type="entry name" value="P-loop containing nucleotide triphosphate hydrolases"/>
    <property type="match status" value="1"/>
</dbReference>
<dbReference type="HAMAP" id="MF_00096">
    <property type="entry name" value="MutS"/>
    <property type="match status" value="1"/>
</dbReference>
<dbReference type="InterPro" id="IPR005748">
    <property type="entry name" value="DNA_mismatch_repair_MutS"/>
</dbReference>
<dbReference type="InterPro" id="IPR007695">
    <property type="entry name" value="DNA_mismatch_repair_MutS-lik_N"/>
</dbReference>
<dbReference type="InterPro" id="IPR017261">
    <property type="entry name" value="DNA_mismatch_repair_MutS/MSH"/>
</dbReference>
<dbReference type="InterPro" id="IPR000432">
    <property type="entry name" value="DNA_mismatch_repair_MutS_C"/>
</dbReference>
<dbReference type="InterPro" id="IPR007861">
    <property type="entry name" value="DNA_mismatch_repair_MutS_clamp"/>
</dbReference>
<dbReference type="InterPro" id="IPR007696">
    <property type="entry name" value="DNA_mismatch_repair_MutS_core"/>
</dbReference>
<dbReference type="InterPro" id="IPR016151">
    <property type="entry name" value="DNA_mismatch_repair_MutS_N"/>
</dbReference>
<dbReference type="InterPro" id="IPR036187">
    <property type="entry name" value="DNA_mismatch_repair_MutS_sf"/>
</dbReference>
<dbReference type="InterPro" id="IPR007860">
    <property type="entry name" value="DNA_mmatch_repair_MutS_con_dom"/>
</dbReference>
<dbReference type="InterPro" id="IPR045076">
    <property type="entry name" value="MutS"/>
</dbReference>
<dbReference type="InterPro" id="IPR036678">
    <property type="entry name" value="MutS_con_dom_sf"/>
</dbReference>
<dbReference type="InterPro" id="IPR027417">
    <property type="entry name" value="P-loop_NTPase"/>
</dbReference>
<dbReference type="NCBIfam" id="TIGR01070">
    <property type="entry name" value="mutS1"/>
    <property type="match status" value="1"/>
</dbReference>
<dbReference type="NCBIfam" id="NF003810">
    <property type="entry name" value="PRK05399.1"/>
    <property type="match status" value="1"/>
</dbReference>
<dbReference type="PANTHER" id="PTHR11361:SF34">
    <property type="entry name" value="DNA MISMATCH REPAIR PROTEIN MSH1, MITOCHONDRIAL"/>
    <property type="match status" value="1"/>
</dbReference>
<dbReference type="PANTHER" id="PTHR11361">
    <property type="entry name" value="DNA MISMATCH REPAIR PROTEIN MUTS FAMILY MEMBER"/>
    <property type="match status" value="1"/>
</dbReference>
<dbReference type="Pfam" id="PF01624">
    <property type="entry name" value="MutS_I"/>
    <property type="match status" value="1"/>
</dbReference>
<dbReference type="Pfam" id="PF05188">
    <property type="entry name" value="MutS_II"/>
    <property type="match status" value="1"/>
</dbReference>
<dbReference type="Pfam" id="PF05192">
    <property type="entry name" value="MutS_III"/>
    <property type="match status" value="1"/>
</dbReference>
<dbReference type="Pfam" id="PF05190">
    <property type="entry name" value="MutS_IV"/>
    <property type="match status" value="1"/>
</dbReference>
<dbReference type="Pfam" id="PF00488">
    <property type="entry name" value="MutS_V"/>
    <property type="match status" value="1"/>
</dbReference>
<dbReference type="PIRSF" id="PIRSF037677">
    <property type="entry name" value="DNA_mis_repair_Msh6"/>
    <property type="match status" value="1"/>
</dbReference>
<dbReference type="SMART" id="SM00534">
    <property type="entry name" value="MUTSac"/>
    <property type="match status" value="1"/>
</dbReference>
<dbReference type="SMART" id="SM00533">
    <property type="entry name" value="MUTSd"/>
    <property type="match status" value="1"/>
</dbReference>
<dbReference type="SUPFAM" id="SSF55271">
    <property type="entry name" value="DNA repair protein MutS, domain I"/>
    <property type="match status" value="1"/>
</dbReference>
<dbReference type="SUPFAM" id="SSF53150">
    <property type="entry name" value="DNA repair protein MutS, domain II"/>
    <property type="match status" value="1"/>
</dbReference>
<dbReference type="SUPFAM" id="SSF48334">
    <property type="entry name" value="DNA repair protein MutS, domain III"/>
    <property type="match status" value="1"/>
</dbReference>
<dbReference type="SUPFAM" id="SSF52540">
    <property type="entry name" value="P-loop containing nucleoside triphosphate hydrolases"/>
    <property type="match status" value="1"/>
</dbReference>
<dbReference type="PROSITE" id="PS00486">
    <property type="entry name" value="DNA_MISMATCH_REPAIR_2"/>
    <property type="match status" value="1"/>
</dbReference>
<reference key="1">
    <citation type="journal article" date="2003" name="Nat. Genet.">
        <title>Comparative analysis of the genome sequences of Bordetella pertussis, Bordetella parapertussis and Bordetella bronchiseptica.</title>
        <authorList>
            <person name="Parkhill J."/>
            <person name="Sebaihia M."/>
            <person name="Preston A."/>
            <person name="Murphy L.D."/>
            <person name="Thomson N.R."/>
            <person name="Harris D.E."/>
            <person name="Holden M.T.G."/>
            <person name="Churcher C.M."/>
            <person name="Bentley S.D."/>
            <person name="Mungall K.L."/>
            <person name="Cerdeno-Tarraga A.-M."/>
            <person name="Temple L."/>
            <person name="James K.D."/>
            <person name="Harris B."/>
            <person name="Quail M.A."/>
            <person name="Achtman M."/>
            <person name="Atkin R."/>
            <person name="Baker S."/>
            <person name="Basham D."/>
            <person name="Bason N."/>
            <person name="Cherevach I."/>
            <person name="Chillingworth T."/>
            <person name="Collins M."/>
            <person name="Cronin A."/>
            <person name="Davis P."/>
            <person name="Doggett J."/>
            <person name="Feltwell T."/>
            <person name="Goble A."/>
            <person name="Hamlin N."/>
            <person name="Hauser H."/>
            <person name="Holroyd S."/>
            <person name="Jagels K."/>
            <person name="Leather S."/>
            <person name="Moule S."/>
            <person name="Norberczak H."/>
            <person name="O'Neil S."/>
            <person name="Ormond D."/>
            <person name="Price C."/>
            <person name="Rabbinowitsch E."/>
            <person name="Rutter S."/>
            <person name="Sanders M."/>
            <person name="Saunders D."/>
            <person name="Seeger K."/>
            <person name="Sharp S."/>
            <person name="Simmonds M."/>
            <person name="Skelton J."/>
            <person name="Squares R."/>
            <person name="Squares S."/>
            <person name="Stevens K."/>
            <person name="Unwin L."/>
            <person name="Whitehead S."/>
            <person name="Barrell B.G."/>
            <person name="Maskell D.J."/>
        </authorList>
    </citation>
    <scope>NUCLEOTIDE SEQUENCE [LARGE SCALE GENOMIC DNA]</scope>
    <source>
        <strain>Tohama I / ATCC BAA-589 / NCTC 13251</strain>
    </source>
</reference>
<keyword id="KW-0067">ATP-binding</keyword>
<keyword id="KW-0227">DNA damage</keyword>
<keyword id="KW-0234">DNA repair</keyword>
<keyword id="KW-0238">DNA-binding</keyword>
<keyword id="KW-0547">Nucleotide-binding</keyword>
<keyword id="KW-1185">Reference proteome</keyword>
<comment type="function">
    <text evidence="1">This protein is involved in the repair of mismatches in DNA. It is possible that it carries out the mismatch recognition step. This protein has a weak ATPase activity.</text>
</comment>
<comment type="similarity">
    <text evidence="1">Belongs to the DNA mismatch repair MutS family.</text>
</comment>
<proteinExistence type="inferred from homology"/>
<organism>
    <name type="scientific">Bordetella pertussis (strain Tohama I / ATCC BAA-589 / NCTC 13251)</name>
    <dbReference type="NCBI Taxonomy" id="257313"/>
    <lineage>
        <taxon>Bacteria</taxon>
        <taxon>Pseudomonadati</taxon>
        <taxon>Pseudomonadota</taxon>
        <taxon>Betaproteobacteria</taxon>
        <taxon>Burkholderiales</taxon>
        <taxon>Alcaligenaceae</taxon>
        <taxon>Bordetella</taxon>
    </lineage>
</organism>
<name>MUTS_BORPE</name>